<reference key="1">
    <citation type="journal article" date="2003" name="Nat. Genet.">
        <title>Comparative analysis of the genome sequences of Bordetella pertussis, Bordetella parapertussis and Bordetella bronchiseptica.</title>
        <authorList>
            <person name="Parkhill J."/>
            <person name="Sebaihia M."/>
            <person name="Preston A."/>
            <person name="Murphy L.D."/>
            <person name="Thomson N.R."/>
            <person name="Harris D.E."/>
            <person name="Holden M.T.G."/>
            <person name="Churcher C.M."/>
            <person name="Bentley S.D."/>
            <person name="Mungall K.L."/>
            <person name="Cerdeno-Tarraga A.-M."/>
            <person name="Temple L."/>
            <person name="James K.D."/>
            <person name="Harris B."/>
            <person name="Quail M.A."/>
            <person name="Achtman M."/>
            <person name="Atkin R."/>
            <person name="Baker S."/>
            <person name="Basham D."/>
            <person name="Bason N."/>
            <person name="Cherevach I."/>
            <person name="Chillingworth T."/>
            <person name="Collins M."/>
            <person name="Cronin A."/>
            <person name="Davis P."/>
            <person name="Doggett J."/>
            <person name="Feltwell T."/>
            <person name="Goble A."/>
            <person name="Hamlin N."/>
            <person name="Hauser H."/>
            <person name="Holroyd S."/>
            <person name="Jagels K."/>
            <person name="Leather S."/>
            <person name="Moule S."/>
            <person name="Norberczak H."/>
            <person name="O'Neil S."/>
            <person name="Ormond D."/>
            <person name="Price C."/>
            <person name="Rabbinowitsch E."/>
            <person name="Rutter S."/>
            <person name="Sanders M."/>
            <person name="Saunders D."/>
            <person name="Seeger K."/>
            <person name="Sharp S."/>
            <person name="Simmonds M."/>
            <person name="Skelton J."/>
            <person name="Squares R."/>
            <person name="Squares S."/>
            <person name="Stevens K."/>
            <person name="Unwin L."/>
            <person name="Whitehead S."/>
            <person name="Barrell B.G."/>
            <person name="Maskell D.J."/>
        </authorList>
    </citation>
    <scope>NUCLEOTIDE SEQUENCE [LARGE SCALE GENOMIC DNA]</scope>
    <source>
        <strain>Tohama I / ATCC BAA-589 / NCTC 13251</strain>
    </source>
</reference>
<organism>
    <name type="scientific">Bordetella pertussis (strain Tohama I / ATCC BAA-589 / NCTC 13251)</name>
    <dbReference type="NCBI Taxonomy" id="257313"/>
    <lineage>
        <taxon>Bacteria</taxon>
        <taxon>Pseudomonadati</taxon>
        <taxon>Pseudomonadota</taxon>
        <taxon>Betaproteobacteria</taxon>
        <taxon>Burkholderiales</taxon>
        <taxon>Alcaligenaceae</taxon>
        <taxon>Bordetella</taxon>
    </lineage>
</organism>
<evidence type="ECO:0000255" key="1">
    <source>
        <dbReference type="HAMAP-Rule" id="MF_00434"/>
    </source>
</evidence>
<evidence type="ECO:0000305" key="2"/>
<protein>
    <recommendedName>
        <fullName evidence="1">Putative pterin-4-alpha-carbinolamine dehydratase</fullName>
        <shortName evidence="1">PHS</shortName>
        <ecNumber evidence="1">4.2.1.96</ecNumber>
    </recommendedName>
    <alternativeName>
        <fullName evidence="1">4-alpha-hydroxy-tetrahydropterin dehydratase</fullName>
    </alternativeName>
    <alternativeName>
        <fullName evidence="1">Pterin carbinolamine dehydratase</fullName>
        <shortName evidence="1">PCD</shortName>
    </alternativeName>
</protein>
<feature type="chain" id="PRO_0000063074" description="Putative pterin-4-alpha-carbinolamine dehydratase">
    <location>
        <begin position="1"/>
        <end position="113"/>
    </location>
</feature>
<proteinExistence type="inferred from homology"/>
<name>PHS_BORPE</name>
<keyword id="KW-0456">Lyase</keyword>
<keyword id="KW-1185">Reference proteome</keyword>
<accession>Q7VU17</accession>
<comment type="catalytic activity">
    <reaction evidence="1">
        <text>(4aS,6R)-4a-hydroxy-L-erythro-5,6,7,8-tetrahydrobiopterin = (6R)-L-erythro-6,7-dihydrobiopterin + H2O</text>
        <dbReference type="Rhea" id="RHEA:11920"/>
        <dbReference type="ChEBI" id="CHEBI:15377"/>
        <dbReference type="ChEBI" id="CHEBI:15642"/>
        <dbReference type="ChEBI" id="CHEBI:43120"/>
        <dbReference type="EC" id="4.2.1.96"/>
    </reaction>
</comment>
<comment type="similarity">
    <text evidence="1">Belongs to the pterin-4-alpha-carbinolamine dehydratase family.</text>
</comment>
<comment type="sequence caution" evidence="2">
    <conflict type="erroneous initiation">
        <sequence resource="EMBL-CDS" id="CAE43590"/>
    </conflict>
</comment>
<sequence length="113" mass="12574">MSTEFPMRIGAEVALPALQGWNAAAGRDAIEKRYRFDNFNAAFGFMARVAMFAEKMDHHPEWRNVYNRVDVTLTTHDAGGVTELDVRMAQFMDEAAGRLGATGLPARADQPRT</sequence>
<gene>
    <name type="ordered locus">BP3325</name>
</gene>
<dbReference type="EC" id="4.2.1.96" evidence="1"/>
<dbReference type="EMBL" id="BX640421">
    <property type="protein sequence ID" value="CAE43590.1"/>
    <property type="status" value="ALT_INIT"/>
    <property type="molecule type" value="Genomic_DNA"/>
</dbReference>
<dbReference type="RefSeq" id="NP_881861.1">
    <property type="nucleotide sequence ID" value="NC_002929.2"/>
</dbReference>
<dbReference type="SMR" id="Q7VU17"/>
<dbReference type="STRING" id="257313.BP3325"/>
<dbReference type="PaxDb" id="257313-BP3325"/>
<dbReference type="KEGG" id="bpe:BP3325"/>
<dbReference type="PATRIC" id="fig|257313.5.peg.3603"/>
<dbReference type="eggNOG" id="COG2154">
    <property type="taxonomic scope" value="Bacteria"/>
</dbReference>
<dbReference type="HOGENOM" id="CLU_081974_3_0_4"/>
<dbReference type="Proteomes" id="UP000002676">
    <property type="component" value="Chromosome"/>
</dbReference>
<dbReference type="GO" id="GO:0008124">
    <property type="term" value="F:4-alpha-hydroxytetrahydrobiopterin dehydratase activity"/>
    <property type="evidence" value="ECO:0007669"/>
    <property type="project" value="UniProtKB-UniRule"/>
</dbReference>
<dbReference type="GO" id="GO:0006729">
    <property type="term" value="P:tetrahydrobiopterin biosynthetic process"/>
    <property type="evidence" value="ECO:0007669"/>
    <property type="project" value="InterPro"/>
</dbReference>
<dbReference type="CDD" id="cd00914">
    <property type="entry name" value="PCD_DCoH_subfamily_b"/>
    <property type="match status" value="1"/>
</dbReference>
<dbReference type="Gene3D" id="3.30.1360.20">
    <property type="entry name" value="Transcriptional coactivator/pterin dehydratase"/>
    <property type="match status" value="1"/>
</dbReference>
<dbReference type="HAMAP" id="MF_00434">
    <property type="entry name" value="Pterin_4_alpha"/>
    <property type="match status" value="1"/>
</dbReference>
<dbReference type="InterPro" id="IPR036428">
    <property type="entry name" value="PCD_sf"/>
</dbReference>
<dbReference type="InterPro" id="IPR001533">
    <property type="entry name" value="Pterin_deHydtase"/>
</dbReference>
<dbReference type="NCBIfam" id="NF002017">
    <property type="entry name" value="PRK00823.1-2"/>
    <property type="match status" value="1"/>
</dbReference>
<dbReference type="NCBIfam" id="NF002018">
    <property type="entry name" value="PRK00823.1-3"/>
    <property type="match status" value="1"/>
</dbReference>
<dbReference type="NCBIfam" id="NF002020">
    <property type="entry name" value="PRK00823.1-5"/>
    <property type="match status" value="1"/>
</dbReference>
<dbReference type="PANTHER" id="PTHR12599">
    <property type="entry name" value="PTERIN-4-ALPHA-CARBINOLAMINE DEHYDRATASE"/>
    <property type="match status" value="1"/>
</dbReference>
<dbReference type="PANTHER" id="PTHR12599:SF0">
    <property type="entry name" value="PTERIN-4-ALPHA-CARBINOLAMINE DEHYDRATASE"/>
    <property type="match status" value="1"/>
</dbReference>
<dbReference type="Pfam" id="PF01329">
    <property type="entry name" value="Pterin_4a"/>
    <property type="match status" value="1"/>
</dbReference>
<dbReference type="SUPFAM" id="SSF55248">
    <property type="entry name" value="PCD-like"/>
    <property type="match status" value="1"/>
</dbReference>